<evidence type="ECO:0000255" key="1">
    <source>
        <dbReference type="HAMAP-Rule" id="MF_01149"/>
    </source>
</evidence>
<accession>A7ZYK2</accession>
<dbReference type="EMBL" id="CP000802">
    <property type="protein sequence ID" value="ABV05356.1"/>
    <property type="molecule type" value="Genomic_DNA"/>
</dbReference>
<dbReference type="RefSeq" id="WP_000109259.1">
    <property type="nucleotide sequence ID" value="NC_009800.1"/>
</dbReference>
<dbReference type="SMR" id="A7ZYK2"/>
<dbReference type="KEGG" id="ecx:EcHS_A1004"/>
<dbReference type="HOGENOM" id="CLU_035018_1_2_6"/>
<dbReference type="GO" id="GO:0005886">
    <property type="term" value="C:plasma membrane"/>
    <property type="evidence" value="ECO:0007669"/>
    <property type="project" value="UniProtKB-SubCell"/>
</dbReference>
<dbReference type="GO" id="GO:0022857">
    <property type="term" value="F:transmembrane transporter activity"/>
    <property type="evidence" value="ECO:0007669"/>
    <property type="project" value="UniProtKB-UniRule"/>
</dbReference>
<dbReference type="CDD" id="cd17477">
    <property type="entry name" value="MFS_YcaD_like"/>
    <property type="match status" value="1"/>
</dbReference>
<dbReference type="FunFam" id="1.20.1250.20:FF:000041">
    <property type="entry name" value="Uncharacterized MFS-type transporter YcaD"/>
    <property type="match status" value="1"/>
</dbReference>
<dbReference type="FunFam" id="1.20.1250.20:FF:000066">
    <property type="entry name" value="Uncharacterized MFS-type transporter YcaD"/>
    <property type="match status" value="1"/>
</dbReference>
<dbReference type="Gene3D" id="1.20.1250.20">
    <property type="entry name" value="MFS general substrate transporter like domains"/>
    <property type="match status" value="2"/>
</dbReference>
<dbReference type="HAMAP" id="MF_01149">
    <property type="entry name" value="MFS_YcaD"/>
    <property type="match status" value="1"/>
</dbReference>
<dbReference type="InterPro" id="IPR011701">
    <property type="entry name" value="MFS"/>
</dbReference>
<dbReference type="InterPro" id="IPR020846">
    <property type="entry name" value="MFS_dom"/>
</dbReference>
<dbReference type="InterPro" id="IPR036259">
    <property type="entry name" value="MFS_trans_sf"/>
</dbReference>
<dbReference type="InterPro" id="IPR023745">
    <property type="entry name" value="MFS_YcaD"/>
</dbReference>
<dbReference type="InterPro" id="IPR047200">
    <property type="entry name" value="MFS_YcaD-like"/>
</dbReference>
<dbReference type="NCBIfam" id="NF002962">
    <property type="entry name" value="PRK03633.1"/>
    <property type="match status" value="1"/>
</dbReference>
<dbReference type="PANTHER" id="PTHR23521">
    <property type="entry name" value="TRANSPORTER MFS SUPERFAMILY"/>
    <property type="match status" value="1"/>
</dbReference>
<dbReference type="PANTHER" id="PTHR23521:SF2">
    <property type="entry name" value="TRANSPORTER MFS SUPERFAMILY"/>
    <property type="match status" value="1"/>
</dbReference>
<dbReference type="Pfam" id="PF07690">
    <property type="entry name" value="MFS_1"/>
    <property type="match status" value="1"/>
</dbReference>
<dbReference type="SUPFAM" id="SSF103473">
    <property type="entry name" value="MFS general substrate transporter"/>
    <property type="match status" value="1"/>
</dbReference>
<dbReference type="PROSITE" id="PS50850">
    <property type="entry name" value="MFS"/>
    <property type="match status" value="1"/>
</dbReference>
<feature type="chain" id="PRO_1000065489" description="Uncharacterized MFS-type transporter YcaD">
    <location>
        <begin position="1"/>
        <end position="382"/>
    </location>
</feature>
<feature type="transmembrane region" description="Helical" evidence="1">
    <location>
        <begin position="14"/>
        <end position="34"/>
    </location>
</feature>
<feature type="transmembrane region" description="Helical" evidence="1">
    <location>
        <begin position="45"/>
        <end position="65"/>
    </location>
</feature>
<feature type="transmembrane region" description="Helical" evidence="1">
    <location>
        <begin position="79"/>
        <end position="99"/>
    </location>
</feature>
<feature type="transmembrane region" description="Helical" evidence="1">
    <location>
        <begin position="102"/>
        <end position="122"/>
    </location>
</feature>
<feature type="transmembrane region" description="Helical" evidence="1">
    <location>
        <begin position="131"/>
        <end position="151"/>
    </location>
</feature>
<feature type="transmembrane region" description="Helical" evidence="1">
    <location>
        <begin position="157"/>
        <end position="177"/>
    </location>
</feature>
<feature type="transmembrane region" description="Helical" evidence="1">
    <location>
        <begin position="204"/>
        <end position="224"/>
    </location>
</feature>
<feature type="transmembrane region" description="Helical" evidence="1">
    <location>
        <begin position="235"/>
        <end position="255"/>
    </location>
</feature>
<feature type="transmembrane region" description="Helical" evidence="1">
    <location>
        <begin position="270"/>
        <end position="290"/>
    </location>
</feature>
<feature type="transmembrane region" description="Helical" evidence="1">
    <location>
        <begin position="291"/>
        <end position="311"/>
    </location>
</feature>
<feature type="transmembrane region" description="Helical" evidence="1">
    <location>
        <begin position="325"/>
        <end position="345"/>
    </location>
</feature>
<feature type="transmembrane region" description="Helical" evidence="1">
    <location>
        <begin position="348"/>
        <end position="368"/>
    </location>
</feature>
<sequence>MSTYTQPVMLLLSGLLLLTLAIAVLNTLVPLWLAQEHMSTWQVGVVSSSYFTGNLVGTLLTGYVIKRIGFNRSYYLASFIFAAGCAGLGLMIGFWSWLAWRFVAGVGCAMIWVVVESALMCSGTSRNRGRLLAAYMMVYYVGTFLGQLLVSKVSTELMSVLPWVTGLTLAGILPLLFTRVLNQQAENHDSTSITSMLKLRQARLGVNGCIISGIVLGSLYGLMPLYLNHKGVSNASIGFWMAVLVSAGILGQWPIGRLADKFGRLLVLRVQVFVVILGSIAMLSQAAMAPALFILGAAGFTLYPVAMAWACEKVEHHQLVAMNQALLLSYTVGSLLGPSFTAMLMQNFSDNLLFIMIASVSFIYLLMLLRNAGHTPKPVAHV</sequence>
<comment type="subcellular location">
    <subcellularLocation>
        <location evidence="1">Cell inner membrane</location>
        <topology evidence="1">Multi-pass membrane protein</topology>
    </subcellularLocation>
</comment>
<comment type="similarity">
    <text evidence="1">Belongs to the major facilitator superfamily. YcaD (TC 2.A.1.26) family.</text>
</comment>
<proteinExistence type="inferred from homology"/>
<gene>
    <name evidence="1" type="primary">ycaD</name>
    <name type="ordered locus">EcHS_A1004</name>
</gene>
<name>YCAD_ECOHS</name>
<keyword id="KW-0997">Cell inner membrane</keyword>
<keyword id="KW-1003">Cell membrane</keyword>
<keyword id="KW-0472">Membrane</keyword>
<keyword id="KW-0812">Transmembrane</keyword>
<keyword id="KW-1133">Transmembrane helix</keyword>
<keyword id="KW-0813">Transport</keyword>
<reference key="1">
    <citation type="journal article" date="2008" name="J. Bacteriol.">
        <title>The pangenome structure of Escherichia coli: comparative genomic analysis of E. coli commensal and pathogenic isolates.</title>
        <authorList>
            <person name="Rasko D.A."/>
            <person name="Rosovitz M.J."/>
            <person name="Myers G.S.A."/>
            <person name="Mongodin E.F."/>
            <person name="Fricke W.F."/>
            <person name="Gajer P."/>
            <person name="Crabtree J."/>
            <person name="Sebaihia M."/>
            <person name="Thomson N.R."/>
            <person name="Chaudhuri R."/>
            <person name="Henderson I.R."/>
            <person name="Sperandio V."/>
            <person name="Ravel J."/>
        </authorList>
    </citation>
    <scope>NUCLEOTIDE SEQUENCE [LARGE SCALE GENOMIC DNA]</scope>
    <source>
        <strain>HS</strain>
    </source>
</reference>
<protein>
    <recommendedName>
        <fullName evidence="1">Uncharacterized MFS-type transporter YcaD</fullName>
    </recommendedName>
</protein>
<organism>
    <name type="scientific">Escherichia coli O9:H4 (strain HS)</name>
    <dbReference type="NCBI Taxonomy" id="331112"/>
    <lineage>
        <taxon>Bacteria</taxon>
        <taxon>Pseudomonadati</taxon>
        <taxon>Pseudomonadota</taxon>
        <taxon>Gammaproteobacteria</taxon>
        <taxon>Enterobacterales</taxon>
        <taxon>Enterobacteriaceae</taxon>
        <taxon>Escherichia</taxon>
    </lineage>
</organism>